<name>IF4EV_SOLET</name>
<organism>
    <name type="scientific">Solanum etuberosum</name>
    <name type="common">Wild potato</name>
    <dbReference type="NCBI Taxonomy" id="200525"/>
    <lineage>
        <taxon>Eukaryota</taxon>
        <taxon>Viridiplantae</taxon>
        <taxon>Streptophyta</taxon>
        <taxon>Embryophyta</taxon>
        <taxon>Tracheophyta</taxon>
        <taxon>Spermatophyta</taxon>
        <taxon>Magnoliopsida</taxon>
        <taxon>eudicotyledons</taxon>
        <taxon>Gunneridae</taxon>
        <taxon>Pentapetalae</taxon>
        <taxon>asterids</taxon>
        <taxon>lamiids</taxon>
        <taxon>Solanales</taxon>
        <taxon>Solanaceae</taxon>
        <taxon>Solanoideae</taxon>
        <taxon>Solaneae</taxon>
        <taxon>Solanum</taxon>
    </lineage>
</organism>
<accession>R4HYA4</accession>
<keyword id="KW-0963">Cytoplasm</keyword>
<keyword id="KW-1015">Disulfide bond</keyword>
<keyword id="KW-0945">Host-virus interaction</keyword>
<keyword id="KW-0396">Initiation factor</keyword>
<keyword id="KW-0539">Nucleus</keyword>
<keyword id="KW-0611">Plant defense</keyword>
<keyword id="KW-0648">Protein biosynthesis</keyword>
<keyword id="KW-0694">RNA-binding</keyword>
<keyword id="KW-0810">Translation regulation</keyword>
<reference key="1">
    <citation type="journal article" date="2012" name="Transgenic Res.">
        <title>Overexpression of the wild potato eIF4E-1 variant Eva1 elicits Potato virus Y resistance in plants silenced for native eIF4E-1.</title>
        <authorList>
            <person name="Duan H."/>
            <person name="Richael C."/>
            <person name="Rommens C.M."/>
        </authorList>
    </citation>
    <scope>NUCLEOTIDE SEQUENCE [MRNA]</scope>
    <scope>FUNCTION</scope>
    <scope>FUNCTION (MICROBIAL INFECTION)</scope>
    <scope>SUBUNIT (MICROBIAL INFECTION)</scope>
    <source>
        <strain>cv. PI 245939</strain>
    </source>
</reference>
<dbReference type="EMBL" id="JF927214">
    <property type="protein sequence ID" value="AEW07372.1"/>
    <property type="molecule type" value="mRNA"/>
</dbReference>
<dbReference type="SMR" id="R4HYA4"/>
<dbReference type="GO" id="GO:0005737">
    <property type="term" value="C:cytoplasm"/>
    <property type="evidence" value="ECO:0000250"/>
    <property type="project" value="UniProtKB"/>
</dbReference>
<dbReference type="GO" id="GO:0016281">
    <property type="term" value="C:eukaryotic translation initiation factor 4F complex"/>
    <property type="evidence" value="ECO:0007669"/>
    <property type="project" value="TreeGrafter"/>
</dbReference>
<dbReference type="GO" id="GO:0005634">
    <property type="term" value="C:nucleus"/>
    <property type="evidence" value="ECO:0000250"/>
    <property type="project" value="UniProtKB"/>
</dbReference>
<dbReference type="GO" id="GO:0000340">
    <property type="term" value="F:RNA 7-methylguanosine cap binding"/>
    <property type="evidence" value="ECO:0007669"/>
    <property type="project" value="TreeGrafter"/>
</dbReference>
<dbReference type="GO" id="GO:0003723">
    <property type="term" value="F:RNA binding"/>
    <property type="evidence" value="ECO:0000314"/>
    <property type="project" value="UniProtKB"/>
</dbReference>
<dbReference type="GO" id="GO:0003743">
    <property type="term" value="F:translation initiation factor activity"/>
    <property type="evidence" value="ECO:0000314"/>
    <property type="project" value="UniProtKB"/>
</dbReference>
<dbReference type="GO" id="GO:0051607">
    <property type="term" value="P:defense response to virus"/>
    <property type="evidence" value="ECO:0000315"/>
    <property type="project" value="UniProtKB"/>
</dbReference>
<dbReference type="GO" id="GO:0006417">
    <property type="term" value="P:regulation of translation"/>
    <property type="evidence" value="ECO:0007669"/>
    <property type="project" value="UniProtKB-KW"/>
</dbReference>
<dbReference type="GO" id="GO:0006413">
    <property type="term" value="P:translational initiation"/>
    <property type="evidence" value="ECO:0000314"/>
    <property type="project" value="UniProtKB"/>
</dbReference>
<dbReference type="FunFam" id="3.30.760.10:FF:000003">
    <property type="entry name" value="Eukaryotic translation initiation factor 4E"/>
    <property type="match status" value="1"/>
</dbReference>
<dbReference type="Gene3D" id="3.30.760.10">
    <property type="entry name" value="RNA Cap, Translation Initiation Factor Eif4e"/>
    <property type="match status" value="1"/>
</dbReference>
<dbReference type="InterPro" id="IPR023398">
    <property type="entry name" value="TIF_eIF4e-like"/>
</dbReference>
<dbReference type="InterPro" id="IPR001040">
    <property type="entry name" value="TIF_eIF_4E"/>
</dbReference>
<dbReference type="PANTHER" id="PTHR11960">
    <property type="entry name" value="EUKARYOTIC TRANSLATION INITIATION FACTOR 4E RELATED"/>
    <property type="match status" value="1"/>
</dbReference>
<dbReference type="PANTHER" id="PTHR11960:SF43">
    <property type="entry name" value="EUKARYOTIC TRANSLATION INITIATION FACTOR 4E-1"/>
    <property type="match status" value="1"/>
</dbReference>
<dbReference type="Pfam" id="PF01652">
    <property type="entry name" value="IF4E"/>
    <property type="match status" value="1"/>
</dbReference>
<dbReference type="SUPFAM" id="SSF55418">
    <property type="entry name" value="eIF4e-like"/>
    <property type="match status" value="1"/>
</dbReference>
<proteinExistence type="evidence at protein level"/>
<protein>
    <recommendedName>
        <fullName evidence="6">Eukaryotic translation initiation factor 4E allele Eva1</fullName>
        <shortName evidence="6">eIF4E-Eva1</shortName>
    </recommendedName>
    <alternativeName>
        <fullName evidence="7">eIF-4F 25 kDa subunit</fullName>
    </alternativeName>
    <alternativeName>
        <fullName evidence="7">eIF-4F p26 subunit</fullName>
    </alternativeName>
    <alternativeName>
        <fullName evidence="6">eIF4E-1 variant 1</fullName>
    </alternativeName>
    <alternativeName>
        <fullName evidence="7">mRNA cap-binding protein</fullName>
    </alternativeName>
</protein>
<gene>
    <name evidence="6" type="primary">eIF4E-eva1</name>
</gene>
<sequence length="231" mass="26121">MAAAEMERTTSFDAAEKLKAADAGGGEVDDELEEGEIVEESNDAASYLGKEITVKHPLEHSWTFWFDNPTARSRQIDWGSSLRNVYTFSTVEDFWGAYNNIHHPSKLVMGADFHCFKHKIEPKWEDPICSNGGTWKMSFSKGKSDTSWLYTLLAMIGHQFDHGDEICGAVVNVRVKGEKIALWTKNAANETAQVSIGKQWKQFLDYSDSVGFIFHDDAKRLDRNAKNRYTV</sequence>
<evidence type="ECO:0000250" key="1">
    <source>
        <dbReference type="UniProtKB" id="K0P2S0"/>
    </source>
</evidence>
<evidence type="ECO:0000250" key="2">
    <source>
        <dbReference type="UniProtKB" id="P29557"/>
    </source>
</evidence>
<evidence type="ECO:0000250" key="3">
    <source>
        <dbReference type="UniProtKB" id="Q00LS8"/>
    </source>
</evidence>
<evidence type="ECO:0000256" key="4">
    <source>
        <dbReference type="SAM" id="MobiDB-lite"/>
    </source>
</evidence>
<evidence type="ECO:0000269" key="5">
    <source>
    </source>
</evidence>
<evidence type="ECO:0000303" key="6">
    <source>
    </source>
</evidence>
<evidence type="ECO:0000305" key="7"/>
<evidence type="ECO:0000305" key="8">
    <source>
    </source>
</evidence>
<feature type="chain" id="PRO_0000454058" description="Eukaryotic translation initiation factor 4E allele Eva1">
    <location>
        <begin position="1"/>
        <end position="231"/>
    </location>
</feature>
<feature type="region of interest" description="Disordered" evidence="4">
    <location>
        <begin position="1"/>
        <end position="34"/>
    </location>
</feature>
<feature type="region of interest" description="EIF4G-binding" evidence="3">
    <location>
        <begin position="56"/>
        <end position="59"/>
    </location>
</feature>
<feature type="region of interest" description="EIF4G-binding" evidence="3">
    <location>
        <begin position="66"/>
        <end position="102"/>
    </location>
</feature>
<feature type="region of interest" description="EIF4G-binding" evidence="3">
    <location>
        <begin position="150"/>
        <end position="159"/>
    </location>
</feature>
<feature type="compositionally biased region" description="Basic and acidic residues" evidence="4">
    <location>
        <begin position="1"/>
        <end position="20"/>
    </location>
</feature>
<feature type="binding site" evidence="2">
    <location>
        <begin position="74"/>
        <end position="79"/>
    </location>
    <ligand>
        <name>mRNA</name>
        <dbReference type="ChEBI" id="CHEBI:33699"/>
    </ligand>
    <ligandPart>
        <name>N(7)-methylguanosine 5'-triphosphate group</name>
        <dbReference type="ChEBI" id="CHEBI:74429"/>
        <note>m7GTP residue in mRNA cap</note>
    </ligandPart>
</feature>
<feature type="binding site" evidence="2">
    <location>
        <position position="106"/>
    </location>
    <ligand>
        <name>mRNA</name>
        <dbReference type="ChEBI" id="CHEBI:33699"/>
    </ligand>
    <ligandPart>
        <name>N(7)-methylguanosine 5'-triphosphate group</name>
        <dbReference type="ChEBI" id="CHEBI:74429"/>
        <note>m7GTP residue in mRNA cap</note>
    </ligandPart>
</feature>
<feature type="binding site" evidence="2">
    <location>
        <begin position="124"/>
        <end position="125"/>
    </location>
    <ligand>
        <name>mRNA</name>
        <dbReference type="ChEBI" id="CHEBI:33699"/>
    </ligand>
    <ligandPart>
        <name>N(7)-methylguanosine 5'-triphosphate group</name>
        <dbReference type="ChEBI" id="CHEBI:74429"/>
        <note>m7GTP residue in mRNA cap</note>
    </ligandPart>
</feature>
<feature type="binding site" evidence="2">
    <location>
        <begin position="174"/>
        <end position="179"/>
    </location>
    <ligand>
        <name>mRNA</name>
        <dbReference type="ChEBI" id="CHEBI:33699"/>
    </ligand>
    <ligandPart>
        <name>N(7)-methylguanosine 5'-triphosphate group</name>
        <dbReference type="ChEBI" id="CHEBI:74429"/>
        <note>m7GTP residue in mRNA cap</note>
    </ligandPart>
</feature>
<feature type="binding site" evidence="3">
    <location>
        <begin position="219"/>
        <end position="223"/>
    </location>
    <ligand>
        <name>mRNA</name>
        <dbReference type="ChEBI" id="CHEBI:33699"/>
    </ligand>
    <ligandPart>
        <name>N(7)-methylguanosine 5'-triphosphate group</name>
        <dbReference type="ChEBI" id="CHEBI:74429"/>
        <note>m7GTP residue in mRNA cap</note>
    </ligandPart>
</feature>
<feature type="disulfide bond" evidence="2">
    <location>
        <begin position="129"/>
        <end position="167"/>
    </location>
</feature>
<comment type="function">
    <text evidence="2 5">Component of the protein complex eIF4F, which is involved in the recognition of the mRNA cap, ATP-dependent unwinding of 5'-terminal secondary structure and recruitment of mRNA to the ribosome (By similarity). Recognizes and binds the 7-methylguanosine-containing mRNA cap during an early step in the initiation of protein synthesis and facilitates ribosome binding by inducing the unwinding of the mRNAs secondary structures (By similarity). Key component of recessive resistance to potyviruses (PubMed:22146867).</text>
</comment>
<comment type="function">
    <text evidence="5">(Microbial infection) Susceptibility host factor required for viral infection (e.g. Potato virus Y (PVY)) by recruiting viral RNAs to the host ribosomal complex via an interaction with viral genome-linked protein (VPg) (PubMed:22146867). Displayed sequence is the allele Eva1 that confers resistance to potato virus Y (PVY) by failing to interact with the viral VPg protein (PubMed:22146867).</text>
</comment>
<comment type="subunit">
    <text evidence="2">EIF4F is a multi-subunit complex, the composition of which varies with external and internal environmental conditions (By similarity). It is composed of at least EIF4A, EIF4E and EIF4G (By similarity). EIF4E is also known to interact with other partners. In higher plants two isoforms of EIF4F have been identified, named isoform EIF4F and isoform EIF(iso)4F (By similarity). Isoform EIF4F has subunits p220 and p26, whereas isoform EIF(iso)4F has subunits p82 and p28 (By similarity).</text>
</comment>
<comment type="subunit">
    <text evidence="8">(Microbial infection) Interacts with potyvirus viral genome-linked protein (VPg); this interaction is possible in susceptible hosts but impaired in resistant plants.</text>
</comment>
<comment type="subcellular location">
    <subcellularLocation>
        <location evidence="1">Nucleus</location>
    </subcellularLocation>
    <subcellularLocation>
        <location evidence="1">Cytoplasm</location>
    </subcellularLocation>
</comment>
<comment type="PTM">
    <text evidence="2">According to the redox status, the Cys-129-Cys-167 disulfide bridge may have a role in regulating protein function by affecting its ability to bind capped mRNA.</text>
</comment>
<comment type="similarity">
    <text evidence="7">Belongs to the eukaryotic initiation factor 4E family.</text>
</comment>